<organism>
    <name type="scientific">Burkholderia cepacia</name>
    <name type="common">Pseudomonas cepacia</name>
    <dbReference type="NCBI Taxonomy" id="292"/>
    <lineage>
        <taxon>Bacteria</taxon>
        <taxon>Pseudomonadati</taxon>
        <taxon>Pseudomonadota</taxon>
        <taxon>Betaproteobacteria</taxon>
        <taxon>Burkholderiales</taxon>
        <taxon>Burkholderiaceae</taxon>
        <taxon>Burkholderia</taxon>
        <taxon>Burkholderia cepacia complex</taxon>
    </lineage>
</organism>
<proteinExistence type="inferred from homology"/>
<sequence>MSTSHPTGLEILEFTFPGSRPAGAIAPVLVGVVGSGNLEVLLEAAAGSDCSVRIETSARGFGPIWEAVLRDFHERHPLAGVRVSINDMGATPAVVSLRLDQAAAEVAS</sequence>
<accession>Q93L23</accession>
<protein>
    <recommendedName>
        <fullName evidence="1">Malonate decarboxylase acyl carrier protein</fullName>
    </recommendedName>
    <alternativeName>
        <fullName evidence="1">Malonate decarboxylase subunit delta</fullName>
    </alternativeName>
</protein>
<feature type="chain" id="PRO_0000220284" description="Malonate decarboxylase acyl carrier protein">
    <location>
        <begin position="1"/>
        <end position="108"/>
    </location>
</feature>
<feature type="modified residue" description="O-(phosphoribosyl dephospho-coenzyme A)serine" evidence="1">
    <location>
        <position position="35"/>
    </location>
</feature>
<evidence type="ECO:0000255" key="1">
    <source>
        <dbReference type="HAMAP-Rule" id="MF_00710"/>
    </source>
</evidence>
<comment type="function">
    <text evidence="1">Subunit of malonate decarboxylase, it is an acyl carrier protein to which acetyl and malonyl thioester residues are bound via a 2'-(5''-phosphoribosyl)-3'-dephospho-CoA prosthetic group and turn over during the catalytic mechanism.</text>
</comment>
<comment type="subcellular location">
    <subcellularLocation>
        <location evidence="1">Cytoplasm</location>
    </subcellularLocation>
</comment>
<comment type="PTM">
    <text evidence="1">Covalently binds the prosthetic group of malonate decarboxylase.</text>
</comment>
<comment type="similarity">
    <text evidence="1">Belongs to the MdcC family.</text>
</comment>
<reference key="1">
    <citation type="journal article" date="2001" name="Microbios">
        <title>2,4-dichlorophenoxyacetate/alpha-ketoglutarate dioxygenases from Burkholderia cepacia 2a and Ralstonia eutropha JMP134.</title>
        <authorList>
            <person name="Poh R.P.C."/>
            <person name="Xia X."/>
            <person name="Bruce I.J."/>
            <person name="Smith A.R.W."/>
        </authorList>
    </citation>
    <scope>NUCLEOTIDE SEQUENCE [GENOMIC DNA]</scope>
    <source>
        <strain>2a</strain>
    </source>
</reference>
<dbReference type="EMBL" id="AF029344">
    <property type="protein sequence ID" value="AAK81668.1"/>
    <property type="molecule type" value="Genomic_DNA"/>
</dbReference>
<dbReference type="RefSeq" id="WP_011171708.1">
    <property type="nucleotide sequence ID" value="NC_019378.1"/>
</dbReference>
<dbReference type="SMR" id="Q93L23"/>
<dbReference type="GO" id="GO:0005737">
    <property type="term" value="C:cytoplasm"/>
    <property type="evidence" value="ECO:0007669"/>
    <property type="project" value="UniProtKB-SubCell"/>
</dbReference>
<dbReference type="HAMAP" id="MF_00710">
    <property type="entry name" value="Malonate_deCO2ase_dsu"/>
    <property type="match status" value="1"/>
</dbReference>
<dbReference type="InterPro" id="IPR023439">
    <property type="entry name" value="Mal_deCO2ase/Cit_lyase_ACP"/>
</dbReference>
<dbReference type="InterPro" id="IPR009662">
    <property type="entry name" value="Malonate_deCO2ase_dsu"/>
</dbReference>
<dbReference type="NCBIfam" id="TIGR03130">
    <property type="entry name" value="malonate_delta"/>
    <property type="match status" value="1"/>
</dbReference>
<dbReference type="Pfam" id="PF06857">
    <property type="entry name" value="ACP"/>
    <property type="match status" value="1"/>
</dbReference>
<gene>
    <name evidence="1" type="primary">mdcC</name>
</gene>
<keyword id="KW-0963">Cytoplasm</keyword>
<keyword id="KW-0597">Phosphoprotein</keyword>
<keyword id="KW-0614">Plasmid</keyword>
<geneLocation type="plasmid">
    <name>pIJB1</name>
</geneLocation>
<name>MDCC_BURCE</name>